<proteinExistence type="inferred from homology"/>
<accession>Q4ZWW3</accession>
<sequence length="336" mass="35962">MKIAIVNDMPMAIEALRRALAFEPAHQIIWVASNGADAVQRCVEQTPDLILMDLIMPVMDGVEATRRIMAETPCAIVIVTVDHEQNMRRVFEAMGHGALDVVDTPAIGGPNPKEAAAPLLRKILNIDWLIGQRVGLERVAATPRAAPSRRDRLVAIGSSAGGPAALEILLKALPVSFPAAIVLVQHVDQVFAAGMADWLSSASGLPVRLAREGETPQPGVVLLAGTNHHIRLLKDGTLAYTAEPVNEVYRPSIDVFFESVTRYWSGEAIGVLLTGMGRDGAQGLKAMRERGFLTIAQDQASSAVYGMPKAAAAIDAAVEIRPLPAIAPRLIEVFTQ</sequence>
<reference key="1">
    <citation type="journal article" date="2005" name="Proc. Natl. Acad. Sci. U.S.A.">
        <title>Comparison of the complete genome sequences of Pseudomonas syringae pv. syringae B728a and pv. tomato DC3000.</title>
        <authorList>
            <person name="Feil H."/>
            <person name="Feil W.S."/>
            <person name="Chain P."/>
            <person name="Larimer F."/>
            <person name="Dibartolo G."/>
            <person name="Copeland A."/>
            <person name="Lykidis A."/>
            <person name="Trong S."/>
            <person name="Nolan M."/>
            <person name="Goltsman E."/>
            <person name="Thiel J."/>
            <person name="Malfatti S."/>
            <person name="Loper J.E."/>
            <person name="Lapidus A."/>
            <person name="Detter J.C."/>
            <person name="Land M."/>
            <person name="Richardson P.M."/>
            <person name="Kyrpides N.C."/>
            <person name="Ivanova N."/>
            <person name="Lindow S.E."/>
        </authorList>
    </citation>
    <scope>NUCLEOTIDE SEQUENCE [LARGE SCALE GENOMIC DNA]</scope>
    <source>
        <strain>B728a</strain>
    </source>
</reference>
<name>CHEB2_PSEU2</name>
<organism>
    <name type="scientific">Pseudomonas syringae pv. syringae (strain B728a)</name>
    <dbReference type="NCBI Taxonomy" id="205918"/>
    <lineage>
        <taxon>Bacteria</taxon>
        <taxon>Pseudomonadati</taxon>
        <taxon>Pseudomonadota</taxon>
        <taxon>Gammaproteobacteria</taxon>
        <taxon>Pseudomonadales</taxon>
        <taxon>Pseudomonadaceae</taxon>
        <taxon>Pseudomonas</taxon>
        <taxon>Pseudomonas syringae</taxon>
    </lineage>
</organism>
<keyword id="KW-0145">Chemotaxis</keyword>
<keyword id="KW-0963">Cytoplasm</keyword>
<keyword id="KW-0378">Hydrolase</keyword>
<keyword id="KW-0597">Phosphoprotein</keyword>
<protein>
    <recommendedName>
        <fullName evidence="1">Protein-glutamate methylesterase/protein-glutamine glutaminase 2</fullName>
        <ecNumber evidence="1">3.1.1.61</ecNumber>
        <ecNumber evidence="1">3.5.1.44</ecNumber>
    </recommendedName>
</protein>
<dbReference type="EC" id="3.1.1.61" evidence="1"/>
<dbReference type="EC" id="3.5.1.44" evidence="1"/>
<dbReference type="EMBL" id="CP000075">
    <property type="protein sequence ID" value="AAY36359.1"/>
    <property type="molecule type" value="Genomic_DNA"/>
</dbReference>
<dbReference type="RefSeq" id="WP_011266950.1">
    <property type="nucleotide sequence ID" value="NC_007005.1"/>
</dbReference>
<dbReference type="RefSeq" id="YP_234397.1">
    <property type="nucleotide sequence ID" value="NC_007005.1"/>
</dbReference>
<dbReference type="SMR" id="Q4ZWW3"/>
<dbReference type="STRING" id="205918.Psyr_1308"/>
<dbReference type="KEGG" id="psb:Psyr_1308"/>
<dbReference type="PATRIC" id="fig|205918.7.peg.1340"/>
<dbReference type="eggNOG" id="COG2201">
    <property type="taxonomic scope" value="Bacteria"/>
</dbReference>
<dbReference type="HOGENOM" id="CLU_000445_51_0_6"/>
<dbReference type="OrthoDB" id="9793421at2"/>
<dbReference type="Proteomes" id="UP000000426">
    <property type="component" value="Chromosome"/>
</dbReference>
<dbReference type="GO" id="GO:0005737">
    <property type="term" value="C:cytoplasm"/>
    <property type="evidence" value="ECO:0007669"/>
    <property type="project" value="UniProtKB-SubCell"/>
</dbReference>
<dbReference type="GO" id="GO:0000156">
    <property type="term" value="F:phosphorelay response regulator activity"/>
    <property type="evidence" value="ECO:0007669"/>
    <property type="project" value="InterPro"/>
</dbReference>
<dbReference type="GO" id="GO:0008984">
    <property type="term" value="F:protein-glutamate methylesterase activity"/>
    <property type="evidence" value="ECO:0007669"/>
    <property type="project" value="UniProtKB-UniRule"/>
</dbReference>
<dbReference type="GO" id="GO:0050568">
    <property type="term" value="F:protein-glutamine glutaminase activity"/>
    <property type="evidence" value="ECO:0007669"/>
    <property type="project" value="UniProtKB-UniRule"/>
</dbReference>
<dbReference type="GO" id="GO:0006935">
    <property type="term" value="P:chemotaxis"/>
    <property type="evidence" value="ECO:0007669"/>
    <property type="project" value="UniProtKB-UniRule"/>
</dbReference>
<dbReference type="CDD" id="cd16432">
    <property type="entry name" value="CheB_Rec"/>
    <property type="match status" value="1"/>
</dbReference>
<dbReference type="CDD" id="cd17541">
    <property type="entry name" value="REC_CheB-like"/>
    <property type="match status" value="1"/>
</dbReference>
<dbReference type="Gene3D" id="3.40.50.2300">
    <property type="match status" value="1"/>
</dbReference>
<dbReference type="Gene3D" id="3.40.50.180">
    <property type="entry name" value="Methylesterase CheB, C-terminal domain"/>
    <property type="match status" value="1"/>
</dbReference>
<dbReference type="HAMAP" id="MF_00099">
    <property type="entry name" value="CheB_chemtxs"/>
    <property type="match status" value="1"/>
</dbReference>
<dbReference type="InterPro" id="IPR008248">
    <property type="entry name" value="CheB-like"/>
</dbReference>
<dbReference type="InterPro" id="IPR035909">
    <property type="entry name" value="CheB_C"/>
</dbReference>
<dbReference type="InterPro" id="IPR011006">
    <property type="entry name" value="CheY-like_superfamily"/>
</dbReference>
<dbReference type="InterPro" id="IPR000673">
    <property type="entry name" value="Sig_transdc_resp-reg_Me-estase"/>
</dbReference>
<dbReference type="InterPro" id="IPR001789">
    <property type="entry name" value="Sig_transdc_resp-reg_receiver"/>
</dbReference>
<dbReference type="NCBIfam" id="NF009206">
    <property type="entry name" value="PRK12555.1"/>
    <property type="match status" value="1"/>
</dbReference>
<dbReference type="PANTHER" id="PTHR42872">
    <property type="entry name" value="PROTEIN-GLUTAMATE METHYLESTERASE/PROTEIN-GLUTAMINE GLUTAMINASE"/>
    <property type="match status" value="1"/>
</dbReference>
<dbReference type="PANTHER" id="PTHR42872:SF6">
    <property type="entry name" value="PROTEIN-GLUTAMATE METHYLESTERASE_PROTEIN-GLUTAMINE GLUTAMINASE"/>
    <property type="match status" value="1"/>
</dbReference>
<dbReference type="Pfam" id="PF01339">
    <property type="entry name" value="CheB_methylest"/>
    <property type="match status" value="1"/>
</dbReference>
<dbReference type="Pfam" id="PF00072">
    <property type="entry name" value="Response_reg"/>
    <property type="match status" value="1"/>
</dbReference>
<dbReference type="PIRSF" id="PIRSF000876">
    <property type="entry name" value="RR_chemtxs_CheB"/>
    <property type="match status" value="1"/>
</dbReference>
<dbReference type="SMART" id="SM00448">
    <property type="entry name" value="REC"/>
    <property type="match status" value="1"/>
</dbReference>
<dbReference type="SUPFAM" id="SSF52172">
    <property type="entry name" value="CheY-like"/>
    <property type="match status" value="1"/>
</dbReference>
<dbReference type="SUPFAM" id="SSF52738">
    <property type="entry name" value="Methylesterase CheB, C-terminal domain"/>
    <property type="match status" value="1"/>
</dbReference>
<dbReference type="PROSITE" id="PS50122">
    <property type="entry name" value="CHEB"/>
    <property type="match status" value="1"/>
</dbReference>
<dbReference type="PROSITE" id="PS50110">
    <property type="entry name" value="RESPONSE_REGULATORY"/>
    <property type="match status" value="1"/>
</dbReference>
<gene>
    <name evidence="1" type="primary">cheB2</name>
    <name type="ordered locus">Psyr_1308</name>
</gene>
<evidence type="ECO:0000255" key="1">
    <source>
        <dbReference type="HAMAP-Rule" id="MF_00099"/>
    </source>
</evidence>
<comment type="function">
    <text evidence="1">Involved in chemotaxis. Part of a chemotaxis signal transduction system that modulates chemotaxis in response to various stimuli. Catalyzes the demethylation of specific methylglutamate residues introduced into the chemoreceptors (methyl-accepting chemotaxis proteins or MCP) by CheR. Also mediates the irreversible deamidation of specific glutamine residues to glutamic acid.</text>
</comment>
<comment type="catalytic activity">
    <reaction evidence="1">
        <text>[protein]-L-glutamate 5-O-methyl ester + H2O = L-glutamyl-[protein] + methanol + H(+)</text>
        <dbReference type="Rhea" id="RHEA:23236"/>
        <dbReference type="Rhea" id="RHEA-COMP:10208"/>
        <dbReference type="Rhea" id="RHEA-COMP:10311"/>
        <dbReference type="ChEBI" id="CHEBI:15377"/>
        <dbReference type="ChEBI" id="CHEBI:15378"/>
        <dbReference type="ChEBI" id="CHEBI:17790"/>
        <dbReference type="ChEBI" id="CHEBI:29973"/>
        <dbReference type="ChEBI" id="CHEBI:82795"/>
        <dbReference type="EC" id="3.1.1.61"/>
    </reaction>
</comment>
<comment type="catalytic activity">
    <reaction evidence="1">
        <text>L-glutaminyl-[protein] + H2O = L-glutamyl-[protein] + NH4(+)</text>
        <dbReference type="Rhea" id="RHEA:16441"/>
        <dbReference type="Rhea" id="RHEA-COMP:10207"/>
        <dbReference type="Rhea" id="RHEA-COMP:10208"/>
        <dbReference type="ChEBI" id="CHEBI:15377"/>
        <dbReference type="ChEBI" id="CHEBI:28938"/>
        <dbReference type="ChEBI" id="CHEBI:29973"/>
        <dbReference type="ChEBI" id="CHEBI:30011"/>
        <dbReference type="EC" id="3.5.1.44"/>
    </reaction>
</comment>
<comment type="subcellular location">
    <subcellularLocation>
        <location evidence="1">Cytoplasm</location>
    </subcellularLocation>
</comment>
<comment type="domain">
    <text evidence="1">Contains a C-terminal catalytic domain, and an N-terminal region which modulates catalytic activity.</text>
</comment>
<comment type="PTM">
    <text evidence="1">Phosphorylated by CheA. Phosphorylation of the N-terminal regulatory domain activates the methylesterase activity.</text>
</comment>
<comment type="similarity">
    <text evidence="1">Belongs to the CheB family.</text>
</comment>
<feature type="chain" id="PRO_0000225477" description="Protein-glutamate methylesterase/protein-glutamine glutaminase 2">
    <location>
        <begin position="1"/>
        <end position="336"/>
    </location>
</feature>
<feature type="domain" description="Response regulatory" evidence="1">
    <location>
        <begin position="2"/>
        <end position="119"/>
    </location>
</feature>
<feature type="domain" description="CheB-type methylesterase" evidence="1">
    <location>
        <begin position="147"/>
        <end position="336"/>
    </location>
</feature>
<feature type="active site" evidence="1">
    <location>
        <position position="159"/>
    </location>
</feature>
<feature type="active site" evidence="1">
    <location>
        <position position="186"/>
    </location>
</feature>
<feature type="active site" evidence="1">
    <location>
        <position position="279"/>
    </location>
</feature>
<feature type="modified residue" description="4-aspartylphosphate" evidence="1">
    <location>
        <position position="53"/>
    </location>
</feature>